<organism>
    <name type="scientific">Edwardsiella ictaluri (strain 93-146)</name>
    <dbReference type="NCBI Taxonomy" id="634503"/>
    <lineage>
        <taxon>Bacteria</taxon>
        <taxon>Pseudomonadati</taxon>
        <taxon>Pseudomonadota</taxon>
        <taxon>Gammaproteobacteria</taxon>
        <taxon>Enterobacterales</taxon>
        <taxon>Hafniaceae</taxon>
        <taxon>Edwardsiella</taxon>
    </lineage>
</organism>
<proteinExistence type="inferred from homology"/>
<gene>
    <name evidence="1" type="primary">ndk</name>
    <name type="ordered locus">NT01EI_3173</name>
</gene>
<sequence>MTLERTFSIVKPNAVAKNAIGAIYARFESAGLKIVAAKMVHLTREQAEGFYAEHRERPFFDGLVTFMTSGPIMVQVLEGNDAVRRNREIMGATNPESALAGTLRADYADSLTENAVHGSDSPASAEREIAYFFSADDICPRTR</sequence>
<feature type="chain" id="PRO_1000206210" description="Nucleoside diphosphate kinase">
    <location>
        <begin position="1"/>
        <end position="143"/>
    </location>
</feature>
<feature type="active site" description="Pros-phosphohistidine intermediate" evidence="1">
    <location>
        <position position="117"/>
    </location>
</feature>
<feature type="binding site" evidence="1">
    <location>
        <position position="11"/>
    </location>
    <ligand>
        <name>ATP</name>
        <dbReference type="ChEBI" id="CHEBI:30616"/>
    </ligand>
</feature>
<feature type="binding site" evidence="1">
    <location>
        <position position="59"/>
    </location>
    <ligand>
        <name>ATP</name>
        <dbReference type="ChEBI" id="CHEBI:30616"/>
    </ligand>
</feature>
<feature type="binding site" evidence="1">
    <location>
        <position position="87"/>
    </location>
    <ligand>
        <name>ATP</name>
        <dbReference type="ChEBI" id="CHEBI:30616"/>
    </ligand>
</feature>
<feature type="binding site" evidence="1">
    <location>
        <position position="93"/>
    </location>
    <ligand>
        <name>ATP</name>
        <dbReference type="ChEBI" id="CHEBI:30616"/>
    </ligand>
</feature>
<feature type="binding site" evidence="1">
    <location>
        <position position="104"/>
    </location>
    <ligand>
        <name>ATP</name>
        <dbReference type="ChEBI" id="CHEBI:30616"/>
    </ligand>
</feature>
<feature type="binding site" evidence="1">
    <location>
        <position position="114"/>
    </location>
    <ligand>
        <name>ATP</name>
        <dbReference type="ChEBI" id="CHEBI:30616"/>
    </ligand>
</feature>
<keyword id="KW-0067">ATP-binding</keyword>
<keyword id="KW-0963">Cytoplasm</keyword>
<keyword id="KW-0418">Kinase</keyword>
<keyword id="KW-0460">Magnesium</keyword>
<keyword id="KW-0479">Metal-binding</keyword>
<keyword id="KW-0546">Nucleotide metabolism</keyword>
<keyword id="KW-0547">Nucleotide-binding</keyword>
<keyword id="KW-0597">Phosphoprotein</keyword>
<keyword id="KW-0808">Transferase</keyword>
<reference key="1">
    <citation type="submission" date="2009-03" db="EMBL/GenBank/DDBJ databases">
        <title>Complete genome sequence of Edwardsiella ictaluri 93-146.</title>
        <authorList>
            <person name="Williams M.L."/>
            <person name="Gillaspy A.F."/>
            <person name="Dyer D.W."/>
            <person name="Thune R.L."/>
            <person name="Waldbieser G.C."/>
            <person name="Schuster S.C."/>
            <person name="Gipson J."/>
            <person name="Zaitshik J."/>
            <person name="Landry C."/>
            <person name="Lawrence M.L."/>
        </authorList>
    </citation>
    <scope>NUCLEOTIDE SEQUENCE [LARGE SCALE GENOMIC DNA]</scope>
    <source>
        <strain>93-146</strain>
    </source>
</reference>
<comment type="function">
    <text evidence="1">Major role in the synthesis of nucleoside triphosphates other than ATP. The ATP gamma phosphate is transferred to the NDP beta phosphate via a ping-pong mechanism, using a phosphorylated active-site intermediate.</text>
</comment>
<comment type="catalytic activity">
    <reaction evidence="1">
        <text>a 2'-deoxyribonucleoside 5'-diphosphate + ATP = a 2'-deoxyribonucleoside 5'-triphosphate + ADP</text>
        <dbReference type="Rhea" id="RHEA:44640"/>
        <dbReference type="ChEBI" id="CHEBI:30616"/>
        <dbReference type="ChEBI" id="CHEBI:61560"/>
        <dbReference type="ChEBI" id="CHEBI:73316"/>
        <dbReference type="ChEBI" id="CHEBI:456216"/>
        <dbReference type="EC" id="2.7.4.6"/>
    </reaction>
</comment>
<comment type="catalytic activity">
    <reaction evidence="1">
        <text>a ribonucleoside 5'-diphosphate + ATP = a ribonucleoside 5'-triphosphate + ADP</text>
        <dbReference type="Rhea" id="RHEA:18113"/>
        <dbReference type="ChEBI" id="CHEBI:30616"/>
        <dbReference type="ChEBI" id="CHEBI:57930"/>
        <dbReference type="ChEBI" id="CHEBI:61557"/>
        <dbReference type="ChEBI" id="CHEBI:456216"/>
        <dbReference type="EC" id="2.7.4.6"/>
    </reaction>
</comment>
<comment type="cofactor">
    <cofactor evidence="1">
        <name>Mg(2+)</name>
        <dbReference type="ChEBI" id="CHEBI:18420"/>
    </cofactor>
</comment>
<comment type="subunit">
    <text evidence="1">Homotetramer.</text>
</comment>
<comment type="subcellular location">
    <subcellularLocation>
        <location evidence="1">Cytoplasm</location>
    </subcellularLocation>
</comment>
<comment type="similarity">
    <text evidence="1">Belongs to the NDK family.</text>
</comment>
<dbReference type="EC" id="2.7.4.6" evidence="1"/>
<dbReference type="EMBL" id="CP001600">
    <property type="protein sequence ID" value="ACR70323.1"/>
    <property type="molecule type" value="Genomic_DNA"/>
</dbReference>
<dbReference type="RefSeq" id="WP_015872411.1">
    <property type="nucleotide sequence ID" value="NZ_CP169062.1"/>
</dbReference>
<dbReference type="SMR" id="C5BET5"/>
<dbReference type="STRING" id="67780.B6E78_07530"/>
<dbReference type="GeneID" id="69540042"/>
<dbReference type="KEGG" id="eic:NT01EI_3173"/>
<dbReference type="PATRIC" id="fig|634503.3.peg.2835"/>
<dbReference type="HOGENOM" id="CLU_060216_8_1_6"/>
<dbReference type="OrthoDB" id="9801161at2"/>
<dbReference type="Proteomes" id="UP000001485">
    <property type="component" value="Chromosome"/>
</dbReference>
<dbReference type="GO" id="GO:0005737">
    <property type="term" value="C:cytoplasm"/>
    <property type="evidence" value="ECO:0007669"/>
    <property type="project" value="UniProtKB-SubCell"/>
</dbReference>
<dbReference type="GO" id="GO:0005524">
    <property type="term" value="F:ATP binding"/>
    <property type="evidence" value="ECO:0007669"/>
    <property type="project" value="UniProtKB-UniRule"/>
</dbReference>
<dbReference type="GO" id="GO:0046872">
    <property type="term" value="F:metal ion binding"/>
    <property type="evidence" value="ECO:0007669"/>
    <property type="project" value="UniProtKB-KW"/>
</dbReference>
<dbReference type="GO" id="GO:0004550">
    <property type="term" value="F:nucleoside diphosphate kinase activity"/>
    <property type="evidence" value="ECO:0007669"/>
    <property type="project" value="UniProtKB-UniRule"/>
</dbReference>
<dbReference type="GO" id="GO:0006241">
    <property type="term" value="P:CTP biosynthetic process"/>
    <property type="evidence" value="ECO:0007669"/>
    <property type="project" value="UniProtKB-UniRule"/>
</dbReference>
<dbReference type="GO" id="GO:0006183">
    <property type="term" value="P:GTP biosynthetic process"/>
    <property type="evidence" value="ECO:0007669"/>
    <property type="project" value="UniProtKB-UniRule"/>
</dbReference>
<dbReference type="GO" id="GO:0006228">
    <property type="term" value="P:UTP biosynthetic process"/>
    <property type="evidence" value="ECO:0007669"/>
    <property type="project" value="UniProtKB-UniRule"/>
</dbReference>
<dbReference type="CDD" id="cd04413">
    <property type="entry name" value="NDPk_I"/>
    <property type="match status" value="1"/>
</dbReference>
<dbReference type="FunFam" id="3.30.70.141:FF:000001">
    <property type="entry name" value="Nucleoside diphosphate kinase"/>
    <property type="match status" value="1"/>
</dbReference>
<dbReference type="Gene3D" id="3.30.70.141">
    <property type="entry name" value="Nucleoside diphosphate kinase-like domain"/>
    <property type="match status" value="1"/>
</dbReference>
<dbReference type="HAMAP" id="MF_00451">
    <property type="entry name" value="NDP_kinase"/>
    <property type="match status" value="1"/>
</dbReference>
<dbReference type="InterPro" id="IPR034907">
    <property type="entry name" value="NDK-like_dom"/>
</dbReference>
<dbReference type="InterPro" id="IPR036850">
    <property type="entry name" value="NDK-like_dom_sf"/>
</dbReference>
<dbReference type="InterPro" id="IPR001564">
    <property type="entry name" value="Nucleoside_diP_kinase"/>
</dbReference>
<dbReference type="InterPro" id="IPR023005">
    <property type="entry name" value="Nucleoside_diP_kinase_AS"/>
</dbReference>
<dbReference type="NCBIfam" id="NF001908">
    <property type="entry name" value="PRK00668.1"/>
    <property type="match status" value="1"/>
</dbReference>
<dbReference type="PANTHER" id="PTHR46161">
    <property type="entry name" value="NUCLEOSIDE DIPHOSPHATE KINASE"/>
    <property type="match status" value="1"/>
</dbReference>
<dbReference type="PANTHER" id="PTHR46161:SF3">
    <property type="entry name" value="NUCLEOSIDE DIPHOSPHATE KINASE DDB_G0292928-RELATED"/>
    <property type="match status" value="1"/>
</dbReference>
<dbReference type="Pfam" id="PF00334">
    <property type="entry name" value="NDK"/>
    <property type="match status" value="1"/>
</dbReference>
<dbReference type="PRINTS" id="PR01243">
    <property type="entry name" value="NUCDPKINASE"/>
</dbReference>
<dbReference type="SMART" id="SM00562">
    <property type="entry name" value="NDK"/>
    <property type="match status" value="1"/>
</dbReference>
<dbReference type="SUPFAM" id="SSF54919">
    <property type="entry name" value="Nucleoside diphosphate kinase, NDK"/>
    <property type="match status" value="1"/>
</dbReference>
<dbReference type="PROSITE" id="PS00469">
    <property type="entry name" value="NDPK"/>
    <property type="match status" value="1"/>
</dbReference>
<dbReference type="PROSITE" id="PS51374">
    <property type="entry name" value="NDPK_LIKE"/>
    <property type="match status" value="1"/>
</dbReference>
<name>NDK_EDWI9</name>
<protein>
    <recommendedName>
        <fullName evidence="1">Nucleoside diphosphate kinase</fullName>
        <shortName evidence="1">NDK</shortName>
        <shortName evidence="1">NDP kinase</shortName>
        <ecNumber evidence="1">2.7.4.6</ecNumber>
    </recommendedName>
    <alternativeName>
        <fullName evidence="1">Nucleoside-2-P kinase</fullName>
    </alternativeName>
</protein>
<accession>C5BET5</accession>
<evidence type="ECO:0000255" key="1">
    <source>
        <dbReference type="HAMAP-Rule" id="MF_00451"/>
    </source>
</evidence>